<dbReference type="EC" id="1.1.99.37" evidence="1"/>
<dbReference type="EMBL" id="U21071">
    <property type="protein sequence ID" value="AAB80771.1"/>
    <property type="molecule type" value="Genomic_DNA"/>
</dbReference>
<dbReference type="SMR" id="Q53062"/>
<dbReference type="STRING" id="1833.XU06_08765"/>
<dbReference type="GO" id="GO:0004022">
    <property type="term" value="F:alcohol dehydrogenase (NAD+) activity"/>
    <property type="evidence" value="ECO:0007669"/>
    <property type="project" value="TreeGrafter"/>
</dbReference>
<dbReference type="GO" id="GO:0000287">
    <property type="term" value="F:magnesium ion binding"/>
    <property type="evidence" value="ECO:0000250"/>
    <property type="project" value="UniProtKB"/>
</dbReference>
<dbReference type="GO" id="GO:0070402">
    <property type="term" value="F:NADPH binding"/>
    <property type="evidence" value="ECO:0000250"/>
    <property type="project" value="UniProtKB"/>
</dbReference>
<dbReference type="GO" id="GO:0016491">
    <property type="term" value="F:oxidoreductase activity"/>
    <property type="evidence" value="ECO:0000250"/>
    <property type="project" value="UniProtKB"/>
</dbReference>
<dbReference type="GO" id="GO:0008270">
    <property type="term" value="F:zinc ion binding"/>
    <property type="evidence" value="ECO:0000250"/>
    <property type="project" value="UniProtKB"/>
</dbReference>
<dbReference type="GO" id="GO:0015946">
    <property type="term" value="P:methanol oxidation"/>
    <property type="evidence" value="ECO:0000250"/>
    <property type="project" value="UniProtKB"/>
</dbReference>
<dbReference type="CDD" id="cd08176">
    <property type="entry name" value="LPO"/>
    <property type="match status" value="1"/>
</dbReference>
<dbReference type="FunFam" id="1.20.1090.10:FF:000013">
    <property type="entry name" value="NDMA-dependent methanol dehydrogenase"/>
    <property type="match status" value="1"/>
</dbReference>
<dbReference type="FunFam" id="3.40.50.1970:FF:000011">
    <property type="entry name" value="NDMA-dependent methanol dehydrogenase"/>
    <property type="match status" value="1"/>
</dbReference>
<dbReference type="Gene3D" id="3.40.50.1970">
    <property type="match status" value="1"/>
</dbReference>
<dbReference type="Gene3D" id="1.20.1090.10">
    <property type="entry name" value="Dehydroquinate synthase-like - alpha domain"/>
    <property type="match status" value="1"/>
</dbReference>
<dbReference type="InterPro" id="IPR001670">
    <property type="entry name" value="ADH_Fe/GldA"/>
</dbReference>
<dbReference type="InterPro" id="IPR056798">
    <property type="entry name" value="ADH_Fe_C"/>
</dbReference>
<dbReference type="InterPro" id="IPR039697">
    <property type="entry name" value="Alcohol_dehydrogenase_Fe"/>
</dbReference>
<dbReference type="InterPro" id="IPR026338">
    <property type="entry name" value="NDMA_methanol_DH"/>
</dbReference>
<dbReference type="NCBIfam" id="TIGR04266">
    <property type="entry name" value="NDMA_methanol"/>
    <property type="match status" value="1"/>
</dbReference>
<dbReference type="PANTHER" id="PTHR11496">
    <property type="entry name" value="ALCOHOL DEHYDROGENASE"/>
    <property type="match status" value="1"/>
</dbReference>
<dbReference type="PANTHER" id="PTHR11496:SF102">
    <property type="entry name" value="ALCOHOL DEHYDROGENASE 4"/>
    <property type="match status" value="1"/>
</dbReference>
<dbReference type="Pfam" id="PF25137">
    <property type="entry name" value="ADH_Fe_C"/>
    <property type="match status" value="1"/>
</dbReference>
<dbReference type="Pfam" id="PF00465">
    <property type="entry name" value="Fe-ADH"/>
    <property type="match status" value="1"/>
</dbReference>
<dbReference type="SUPFAM" id="SSF56796">
    <property type="entry name" value="Dehydroquinate synthase-like"/>
    <property type="match status" value="1"/>
</dbReference>
<sequence>AIELNQIWDFPIKEFHPFPRALMGVGAHDIIGVEAKNLGFKRTLLMTTGLRGSGIIEELVGKIEYQGVEVVLYDKVESNPKDYNVMEAAALYQKEKCDSIISIGGGSSHDAAKGARVVIAHDGRNINEFEGFAKSTNKENPPHIAVSTTAGTGSETSWAYVITDTSDMNNPHKWVGFDEATIVTLAIDDPLLYYTCPQHFTAYCGFDVLAHGSEPFVSRLDFAPSLGNAIYSVELVAKNLREAVFEPRNLKAREGMMNAQYIAGQAFNSGGLGIVHSISHAVSAFFDSHHGLNNAIALPRVWEYNLPSRYERYAQLAGALGVDTRNLTTVQAADAAVEAAIRLAKDVGIPDNFGQVRTDSYAKNQMNTKKYEGRGDVIKGDEKTVRAISEHIQDDWCTPGNPREVTVESMIPVVDHAINKSYF</sequence>
<organism>
    <name type="scientific">Rhodococcus erythropolis</name>
    <name type="common">Arthrobacter picolinophilus</name>
    <dbReference type="NCBI Taxonomy" id="1833"/>
    <lineage>
        <taxon>Bacteria</taxon>
        <taxon>Bacillati</taxon>
        <taxon>Actinomycetota</taxon>
        <taxon>Actinomycetes</taxon>
        <taxon>Mycobacteriales</taxon>
        <taxon>Nocardiaceae</taxon>
        <taxon>Rhodococcus</taxon>
        <taxon>Rhodococcus erythropolis group</taxon>
    </lineage>
</organism>
<reference key="1">
    <citation type="journal article" date="1995" name="Arch. Microbiol.">
        <title>Characterization of the Rhodococcus sp. NI86/21 gene encoding alcohol:N,N'-dimethyl-4-nitrosoaniline oxidoreductase inducible by atrazine and thiocarbamate herbicides.</title>
        <authorList>
            <person name="Nagy I."/>
            <person name="Verheijen S."/>
            <person name="De Schrijver A."/>
            <person name="Van Damme J."/>
            <person name="Proost P."/>
            <person name="Schoofs G."/>
            <person name="Vanderleyden J."/>
            <person name="De Mot R."/>
        </authorList>
    </citation>
    <scope>NUCLEOTIDE SEQUENCE [GENOMIC DNA]</scope>
    <scope>PROTEIN SEQUENCE OF 1-19; 88-105 AND 180-195</scope>
    <scope>INDUCTION</scope>
    <source>
        <strain>NI86/21</strain>
    </source>
</reference>
<keyword id="KW-0903">Direct protein sequencing</keyword>
<keyword id="KW-0460">Magnesium</keyword>
<keyword id="KW-0485">Methanol utilization</keyword>
<keyword id="KW-0521">NADP</keyword>
<keyword id="KW-0560">Oxidoreductase</keyword>
<keyword id="KW-0862">Zinc</keyword>
<feature type="chain" id="PRO_0000247755" description="Methanol:N,N-dimethyl-4-nitrosoaniline oxidoreductase">
    <location>
        <begin position="1"/>
        <end position="423"/>
    </location>
</feature>
<proteinExistence type="evidence at protein level"/>
<comment type="function">
    <text evidence="1">Catalyzes the oxidation of methanol to yield formaldehyde. While the in vivo electron acceptor is not known, N,N-dimethyl-4-nitrosoaniline (NDMA) can serve this function in vitro and is reduced to 4-(hydroxylamino)-N,N-dimethylaniline.</text>
</comment>
<comment type="catalytic activity">
    <reaction evidence="1">
        <text>methanol + A = formaldehyde + AH2</text>
        <dbReference type="Rhea" id="RHEA:33571"/>
        <dbReference type="ChEBI" id="CHEBI:13193"/>
        <dbReference type="ChEBI" id="CHEBI:16842"/>
        <dbReference type="ChEBI" id="CHEBI:17499"/>
        <dbReference type="ChEBI" id="CHEBI:17790"/>
        <dbReference type="EC" id="1.1.99.37"/>
    </reaction>
</comment>
<comment type="cofactor">
    <cofactor evidence="2">
        <name>Mg(2+)</name>
        <dbReference type="ChEBI" id="CHEBI:18420"/>
    </cofactor>
</comment>
<comment type="cofactor">
    <cofactor evidence="2">
        <name>Zn(2+)</name>
        <dbReference type="ChEBI" id="CHEBI:29105"/>
    </cofactor>
</comment>
<comment type="cofactor">
    <cofactor evidence="2">
        <name>NADPH</name>
        <dbReference type="ChEBI" id="CHEBI:57783"/>
    </cofactor>
</comment>
<comment type="subunit">
    <text evidence="2">Homodecamer.</text>
</comment>
<comment type="induction">
    <text evidence="3">Expressed during degradation of thiocarbamates and atrazine.</text>
</comment>
<comment type="similarity">
    <text evidence="5">Belongs to the iron-containing alcohol dehydrogenase family.</text>
</comment>
<gene>
    <name type="primary">thcE</name>
</gene>
<evidence type="ECO:0000250" key="1">
    <source>
        <dbReference type="UniProtKB" id="C5MRT8"/>
    </source>
</evidence>
<evidence type="ECO:0000250" key="2">
    <source>
        <dbReference type="UniProtKB" id="Q9RCG0"/>
    </source>
</evidence>
<evidence type="ECO:0000269" key="3">
    <source>
    </source>
</evidence>
<evidence type="ECO:0000303" key="4">
    <source>
    </source>
</evidence>
<evidence type="ECO:0000305" key="5"/>
<name>MNO_RHOER</name>
<protein>
    <recommendedName>
        <fullName evidence="4">Methanol:N,N-dimethyl-4-nitrosoaniline oxidoreductase</fullName>
        <shortName evidence="4">MNO</shortName>
        <ecNumber evidence="1">1.1.99.37</ecNumber>
    </recommendedName>
    <alternativeName>
        <fullName evidence="5">Methanol dehydrogenase (nicotinoprotein)</fullName>
    </alternativeName>
    <alternativeName>
        <fullName evidence="1">Methanol:NDMA oxidoreductase</fullName>
    </alternativeName>
</protein>
<accession>Q53062</accession>
<accession>P81938</accession>